<name>KA122_TITTR</name>
<comment type="function">
    <text evidence="1">Inhibits high conductance calcium-activated potassium channels (By similarity). Reversibly inhibits Shaker B potassium channels.</text>
</comment>
<comment type="subcellular location">
    <subcellularLocation>
        <location>Secreted</location>
    </subcellularLocation>
</comment>
<comment type="tissue specificity">
    <text>Expressed by the venom gland.</text>
</comment>
<comment type="domain">
    <text evidence="3">Has the structural arrangement of an alpha-helix connected to antiparallel beta-sheets by disulfide bonds (CS-alpha/beta).</text>
</comment>
<comment type="mass spectrometry" mass="4507.0" method="Electrospray" evidence="2"/>
<comment type="miscellaneous">
    <text>The N-terminal C2-C5 disulfide bridge unique to this toxin does not appear to confer stability to the protein.</text>
</comment>
<comment type="similarity">
    <text evidence="3">Belongs to the short scorpion toxin superfamily. Potassium channel inhibitor family. Alpha-KTx 12 subfamily.</text>
</comment>
<proteinExistence type="evidence at protein level"/>
<reference key="1">
    <citation type="journal article" date="2003" name="Toxicon">
        <title>Disulfide bridges and blockage of Shaker B K(+)-channels by another butantoxin peptide purified from the Argentinean scorpion Tityus trivittatus.</title>
        <authorList>
            <person name="Coronas F.V."/>
            <person name="de Roodt A.R."/>
            <person name="Olamendi-Portugal T."/>
            <person name="Zamudio F.Z."/>
            <person name="Batista C.V.F."/>
            <person name="Gomez-Lagunas F."/>
            <person name="Possani L.D."/>
        </authorList>
    </citation>
    <scope>PROTEIN SEQUENCE</scope>
    <scope>DISULFIDE BONDS</scope>
    <scope>MASS SPECTROMETRY</scope>
</reference>
<reference key="2">
    <citation type="journal article" date="2000" name="Arch. Biochem. Biophys.">
        <title>NMR solution structure of butantoxin.</title>
        <authorList>
            <person name="Holaday S.K. Jr."/>
            <person name="Martin B.M."/>
            <person name="Fletcher P.L. Jr."/>
            <person name="Krishna N.R."/>
        </authorList>
    </citation>
    <scope>STRUCTURE BY NMR</scope>
    <scope>DISULFIDE BONDS</scope>
    <scope>IDENTIFICATION BY MASS SPECTROMETRY</scope>
</reference>
<sequence length="40" mass="4514">WCSTCLDLACGASRECYDPCFKAFGRAHGKCMNNKCRCYT</sequence>
<protein>
    <recommendedName>
        <fullName>Potassium channel toxin alpha-KTx 12.2</fullName>
    </recommendedName>
    <alternativeName>
        <fullName>Butantoxin</fullName>
        <shortName>BuTX</shortName>
    </alternativeName>
    <alternativeName>
        <fullName>TtBut</fullName>
    </alternativeName>
</protein>
<dbReference type="BMRB" id="P0C168"/>
<dbReference type="SMR" id="P0C168"/>
<dbReference type="GO" id="GO:0005576">
    <property type="term" value="C:extracellular region"/>
    <property type="evidence" value="ECO:0007669"/>
    <property type="project" value="UniProtKB-SubCell"/>
</dbReference>
<dbReference type="GO" id="GO:0008200">
    <property type="term" value="F:ion channel inhibitor activity"/>
    <property type="evidence" value="ECO:0007669"/>
    <property type="project" value="InterPro"/>
</dbReference>
<dbReference type="GO" id="GO:0015459">
    <property type="term" value="F:potassium channel regulator activity"/>
    <property type="evidence" value="ECO:0007669"/>
    <property type="project" value="UniProtKB-KW"/>
</dbReference>
<dbReference type="GO" id="GO:0090729">
    <property type="term" value="F:toxin activity"/>
    <property type="evidence" value="ECO:0007669"/>
    <property type="project" value="UniProtKB-KW"/>
</dbReference>
<dbReference type="Gene3D" id="3.30.30.10">
    <property type="entry name" value="Knottin, scorpion toxin-like"/>
    <property type="match status" value="1"/>
</dbReference>
<dbReference type="InterPro" id="IPR036574">
    <property type="entry name" value="Scorpion_toxin-like_sf"/>
</dbReference>
<dbReference type="InterPro" id="IPR001947">
    <property type="entry name" value="Scorpion_toxinS_K_inh"/>
</dbReference>
<dbReference type="Pfam" id="PF00451">
    <property type="entry name" value="Toxin_2"/>
    <property type="match status" value="1"/>
</dbReference>
<dbReference type="PRINTS" id="PR00286">
    <property type="entry name" value="CHARYBDTOXIN"/>
</dbReference>
<dbReference type="SUPFAM" id="SSF57095">
    <property type="entry name" value="Scorpion toxin-like"/>
    <property type="match status" value="1"/>
</dbReference>
<dbReference type="PROSITE" id="PS01138">
    <property type="entry name" value="SCORP_SHORT_TOXIN"/>
    <property type="match status" value="1"/>
</dbReference>
<evidence type="ECO:0000250" key="1"/>
<evidence type="ECO:0000269" key="2">
    <source>
    </source>
</evidence>
<evidence type="ECO:0000305" key="3"/>
<organism>
    <name type="scientific">Tityus trivittatus</name>
    <name type="common">Argentinean scorpion</name>
    <dbReference type="NCBI Taxonomy" id="369776"/>
    <lineage>
        <taxon>Eukaryota</taxon>
        <taxon>Metazoa</taxon>
        <taxon>Ecdysozoa</taxon>
        <taxon>Arthropoda</taxon>
        <taxon>Chelicerata</taxon>
        <taxon>Arachnida</taxon>
        <taxon>Scorpiones</taxon>
        <taxon>Buthida</taxon>
        <taxon>Buthoidea</taxon>
        <taxon>Buthidae</taxon>
        <taxon>Tityus</taxon>
    </lineage>
</organism>
<keyword id="KW-1221">Calcium-activated potassium channel impairing toxin</keyword>
<keyword id="KW-0903">Direct protein sequencing</keyword>
<keyword id="KW-1015">Disulfide bond</keyword>
<keyword id="KW-0872">Ion channel impairing toxin</keyword>
<keyword id="KW-0528">Neurotoxin</keyword>
<keyword id="KW-0632">Potassium channel impairing toxin</keyword>
<keyword id="KW-0964">Secreted</keyword>
<keyword id="KW-0800">Toxin</keyword>
<accession>P0C168</accession>
<feature type="chain" id="PRO_0000226996" description="Potassium channel toxin alpha-KTx 12.2">
    <location>
        <begin position="1"/>
        <end position="40"/>
    </location>
</feature>
<feature type="site" description="Basic residue of the functional dyad" evidence="1">
    <location>
        <position position="30"/>
    </location>
</feature>
<feature type="site" description="Aromatic residue of the functional dyad" evidence="1">
    <location>
        <position position="39"/>
    </location>
</feature>
<feature type="disulfide bond">
    <location>
        <begin position="2"/>
        <end position="5"/>
    </location>
</feature>
<feature type="disulfide bond">
    <location>
        <begin position="10"/>
        <end position="31"/>
    </location>
</feature>
<feature type="disulfide bond">
    <location>
        <begin position="16"/>
        <end position="36"/>
    </location>
</feature>
<feature type="disulfide bond">
    <location>
        <begin position="20"/>
        <end position="38"/>
    </location>
</feature>